<protein>
    <recommendedName>
        <fullName evidence="1">Integration host factor subunit alpha</fullName>
        <shortName evidence="1">IHF-alpha</shortName>
    </recommendedName>
</protein>
<gene>
    <name evidence="1" type="primary">ihfA</name>
    <name evidence="1" type="synonym">himA</name>
    <name type="ordered locus">BT_1308</name>
</gene>
<reference key="1">
    <citation type="journal article" date="2007" name="Nat. Genet.">
        <title>Genomic analysis of Bartonella identifies type IV secretion systems as host adaptability factors.</title>
        <authorList>
            <person name="Saenz H.L."/>
            <person name="Engel P."/>
            <person name="Stoeckli M.C."/>
            <person name="Lanz C."/>
            <person name="Raddatz G."/>
            <person name="Vayssier-Taussat M."/>
            <person name="Birtles R."/>
            <person name="Schuster S.C."/>
            <person name="Dehio C."/>
        </authorList>
    </citation>
    <scope>NUCLEOTIDE SEQUENCE [LARGE SCALE GENOMIC DNA]</scope>
    <source>
        <strain>CIP 105476 / IBS 506</strain>
    </source>
</reference>
<organism>
    <name type="scientific">Bartonella tribocorum (strain CIP 105476 / IBS 506)</name>
    <dbReference type="NCBI Taxonomy" id="382640"/>
    <lineage>
        <taxon>Bacteria</taxon>
        <taxon>Pseudomonadati</taxon>
        <taxon>Pseudomonadota</taxon>
        <taxon>Alphaproteobacteria</taxon>
        <taxon>Hyphomicrobiales</taxon>
        <taxon>Bartonellaceae</taxon>
        <taxon>Bartonella</taxon>
    </lineage>
</organism>
<feature type="chain" id="PRO_1000080023" description="Integration host factor subunit alpha">
    <location>
        <begin position="1"/>
        <end position="107"/>
    </location>
</feature>
<keyword id="KW-0233">DNA recombination</keyword>
<keyword id="KW-0238">DNA-binding</keyword>
<keyword id="KW-0804">Transcription</keyword>
<keyword id="KW-0805">Transcription regulation</keyword>
<keyword id="KW-0810">Translation regulation</keyword>
<evidence type="ECO:0000255" key="1">
    <source>
        <dbReference type="HAMAP-Rule" id="MF_00380"/>
    </source>
</evidence>
<dbReference type="EMBL" id="AM260525">
    <property type="protein sequence ID" value="CAK01672.1"/>
    <property type="molecule type" value="Genomic_DNA"/>
</dbReference>
<dbReference type="RefSeq" id="WP_012231854.1">
    <property type="nucleotide sequence ID" value="NC_010161.1"/>
</dbReference>
<dbReference type="SMR" id="A9IVB2"/>
<dbReference type="KEGG" id="btr:BT_1308"/>
<dbReference type="eggNOG" id="COG0776">
    <property type="taxonomic scope" value="Bacteria"/>
</dbReference>
<dbReference type="HOGENOM" id="CLU_105066_1_1_5"/>
<dbReference type="Proteomes" id="UP000001592">
    <property type="component" value="Chromosome"/>
</dbReference>
<dbReference type="GO" id="GO:0005829">
    <property type="term" value="C:cytosol"/>
    <property type="evidence" value="ECO:0007669"/>
    <property type="project" value="TreeGrafter"/>
</dbReference>
<dbReference type="GO" id="GO:0003677">
    <property type="term" value="F:DNA binding"/>
    <property type="evidence" value="ECO:0007669"/>
    <property type="project" value="UniProtKB-UniRule"/>
</dbReference>
<dbReference type="GO" id="GO:0030527">
    <property type="term" value="F:structural constituent of chromatin"/>
    <property type="evidence" value="ECO:0007669"/>
    <property type="project" value="InterPro"/>
</dbReference>
<dbReference type="GO" id="GO:0006310">
    <property type="term" value="P:DNA recombination"/>
    <property type="evidence" value="ECO:0007669"/>
    <property type="project" value="UniProtKB-UniRule"/>
</dbReference>
<dbReference type="GO" id="GO:0009893">
    <property type="term" value="P:positive regulation of metabolic process"/>
    <property type="evidence" value="ECO:0007669"/>
    <property type="project" value="UniProtKB-ARBA"/>
</dbReference>
<dbReference type="GO" id="GO:0006355">
    <property type="term" value="P:regulation of DNA-templated transcription"/>
    <property type="evidence" value="ECO:0007669"/>
    <property type="project" value="UniProtKB-UniRule"/>
</dbReference>
<dbReference type="GO" id="GO:0006417">
    <property type="term" value="P:regulation of translation"/>
    <property type="evidence" value="ECO:0007669"/>
    <property type="project" value="UniProtKB-UniRule"/>
</dbReference>
<dbReference type="CDD" id="cd13835">
    <property type="entry name" value="IHF_A"/>
    <property type="match status" value="1"/>
</dbReference>
<dbReference type="Gene3D" id="4.10.520.10">
    <property type="entry name" value="IHF-like DNA-binding proteins"/>
    <property type="match status" value="1"/>
</dbReference>
<dbReference type="HAMAP" id="MF_00380">
    <property type="entry name" value="IHF_alpha"/>
    <property type="match status" value="1"/>
</dbReference>
<dbReference type="InterPro" id="IPR000119">
    <property type="entry name" value="Hist_DNA-bd"/>
</dbReference>
<dbReference type="InterPro" id="IPR020816">
    <property type="entry name" value="Histone-like_DNA-bd_CS"/>
</dbReference>
<dbReference type="InterPro" id="IPR010992">
    <property type="entry name" value="IHF-like_DNA-bd_dom_sf"/>
</dbReference>
<dbReference type="InterPro" id="IPR005684">
    <property type="entry name" value="IHF_alpha"/>
</dbReference>
<dbReference type="NCBIfam" id="NF001401">
    <property type="entry name" value="PRK00285.1"/>
    <property type="match status" value="1"/>
</dbReference>
<dbReference type="PANTHER" id="PTHR33175">
    <property type="entry name" value="DNA-BINDING PROTEIN HU"/>
    <property type="match status" value="1"/>
</dbReference>
<dbReference type="PANTHER" id="PTHR33175:SF2">
    <property type="entry name" value="INTEGRATION HOST FACTOR SUBUNIT ALPHA"/>
    <property type="match status" value="1"/>
</dbReference>
<dbReference type="Pfam" id="PF00216">
    <property type="entry name" value="Bac_DNA_binding"/>
    <property type="match status" value="1"/>
</dbReference>
<dbReference type="PRINTS" id="PR01727">
    <property type="entry name" value="DNABINDINGHU"/>
</dbReference>
<dbReference type="SMART" id="SM00411">
    <property type="entry name" value="BHL"/>
    <property type="match status" value="1"/>
</dbReference>
<dbReference type="SUPFAM" id="SSF47729">
    <property type="entry name" value="IHF-like DNA-binding proteins"/>
    <property type="match status" value="1"/>
</dbReference>
<dbReference type="PROSITE" id="PS00045">
    <property type="entry name" value="HISTONE_LIKE"/>
    <property type="match status" value="1"/>
</dbReference>
<accession>A9IVB2</accession>
<comment type="function">
    <text evidence="1">This protein is one of the two subunits of integration host factor, a specific DNA-binding protein that functions in genetic recombination as well as in transcriptional and translational control.</text>
</comment>
<comment type="subunit">
    <text evidence="1">Heterodimer of an alpha and a beta chain.</text>
</comment>
<comment type="similarity">
    <text evidence="1">Belongs to the bacterial histone-like protein family.</text>
</comment>
<proteinExistence type="inferred from homology"/>
<sequence length="107" mass="11782">MTSKTVTRADLASVVCKKVGLSHTESAALVELVLDEICNSLVRGEAVKLSSFATFQVRSKNERIGRNPKTGVEAPIPPRRVVTFKAANILKQRILDSHRAKQKKDLL</sequence>
<name>IHFA_BART1</name>